<keyword id="KW-0067">ATP-binding</keyword>
<keyword id="KW-0175">Coiled coil</keyword>
<keyword id="KW-0963">Cytoplasm</keyword>
<keyword id="KW-0479">Metal-binding</keyword>
<keyword id="KW-0507">mRNA processing</keyword>
<keyword id="KW-0547">Nucleotide-binding</keyword>
<keyword id="KW-1185">Reference proteome</keyword>
<keyword id="KW-0862">Zinc</keyword>
<keyword id="KW-0863">Zinc-finger</keyword>
<protein>
    <recommendedName>
        <fullName evidence="1">PAN2-PAN3 deadenylation complex subunit pan3</fullName>
    </recommendedName>
    <alternativeName>
        <fullName evidence="1">PAB1P-dependent poly(A)-specific ribonuclease</fullName>
    </alternativeName>
    <alternativeName>
        <fullName evidence="1">Poly(A)-nuclease deadenylation complex subunit 3</fullName>
        <shortName evidence="1">PAN deadenylation complex subunit 3</shortName>
    </alternativeName>
</protein>
<evidence type="ECO:0000255" key="1">
    <source>
        <dbReference type="HAMAP-Rule" id="MF_03181"/>
    </source>
</evidence>
<evidence type="ECO:0000256" key="2">
    <source>
        <dbReference type="SAM" id="MobiDB-lite"/>
    </source>
</evidence>
<evidence type="ECO:0000305" key="3"/>
<dbReference type="EMBL" id="AACD01000012">
    <property type="protein sequence ID" value="EAA65411.1"/>
    <property type="status" value="ALT_SEQ"/>
    <property type="molecule type" value="Genomic_DNA"/>
</dbReference>
<dbReference type="EMBL" id="BN001308">
    <property type="protein sequence ID" value="CBF88822.1"/>
    <property type="status" value="ALT_SEQ"/>
    <property type="molecule type" value="Genomic_DNA"/>
</dbReference>
<dbReference type="EMBL" id="BN001308">
    <property type="protein sequence ID" value="CBF88820.1"/>
    <property type="status" value="ALT_SEQ"/>
    <property type="molecule type" value="Genomic_DNA"/>
</dbReference>
<dbReference type="RefSeq" id="XP_658373.1">
    <property type="nucleotide sequence ID" value="XM_653281.1"/>
</dbReference>
<dbReference type="SMR" id="Q5BFB1"/>
<dbReference type="FunCoup" id="Q5BFB1">
    <property type="interactions" value="624"/>
</dbReference>
<dbReference type="STRING" id="227321.Q5BFB1"/>
<dbReference type="eggNOG" id="KOG3741">
    <property type="taxonomic scope" value="Eukaryota"/>
</dbReference>
<dbReference type="HOGENOM" id="CLU_016423_1_0_1"/>
<dbReference type="InParanoid" id="Q5BFB1"/>
<dbReference type="Proteomes" id="UP000000560">
    <property type="component" value="Chromosome VIII"/>
</dbReference>
<dbReference type="GO" id="GO:0000932">
    <property type="term" value="C:P-body"/>
    <property type="evidence" value="ECO:0000318"/>
    <property type="project" value="GO_Central"/>
</dbReference>
<dbReference type="GO" id="GO:0031251">
    <property type="term" value="C:PAN complex"/>
    <property type="evidence" value="ECO:0000318"/>
    <property type="project" value="GO_Central"/>
</dbReference>
<dbReference type="GO" id="GO:0005524">
    <property type="term" value="F:ATP binding"/>
    <property type="evidence" value="ECO:0007669"/>
    <property type="project" value="UniProtKB-UniRule"/>
</dbReference>
<dbReference type="GO" id="GO:0008143">
    <property type="term" value="F:poly(A) binding"/>
    <property type="evidence" value="ECO:0000318"/>
    <property type="project" value="GO_Central"/>
</dbReference>
<dbReference type="GO" id="GO:0004672">
    <property type="term" value="F:protein kinase activity"/>
    <property type="evidence" value="ECO:0007669"/>
    <property type="project" value="InterPro"/>
</dbReference>
<dbReference type="GO" id="GO:0008270">
    <property type="term" value="F:zinc ion binding"/>
    <property type="evidence" value="ECO:0007669"/>
    <property type="project" value="UniProtKB-KW"/>
</dbReference>
<dbReference type="GO" id="GO:0006397">
    <property type="term" value="P:mRNA processing"/>
    <property type="evidence" value="ECO:0007669"/>
    <property type="project" value="UniProtKB-KW"/>
</dbReference>
<dbReference type="GO" id="GO:0000289">
    <property type="term" value="P:nuclear-transcribed mRNA poly(A) tail shortening"/>
    <property type="evidence" value="ECO:0000318"/>
    <property type="project" value="GO_Central"/>
</dbReference>
<dbReference type="FunFam" id="1.10.287.3700:FF:000001">
    <property type="entry name" value="PAN2-PAN3 deadenylation complex subunit PAN3"/>
    <property type="match status" value="1"/>
</dbReference>
<dbReference type="FunFam" id="1.10.510.10:FF:000520">
    <property type="entry name" value="PAN2-PAN3 deadenylation complex subunit PAN3"/>
    <property type="match status" value="1"/>
</dbReference>
<dbReference type="FunFam" id="1.20.5.5160:FF:000002">
    <property type="entry name" value="PAN2-PAN3 deadenylation complex subunit PAN3"/>
    <property type="match status" value="1"/>
</dbReference>
<dbReference type="Gene3D" id="1.10.287.3700">
    <property type="match status" value="1"/>
</dbReference>
<dbReference type="Gene3D" id="1.20.5.5160">
    <property type="match status" value="1"/>
</dbReference>
<dbReference type="Gene3D" id="6.10.250.3160">
    <property type="match status" value="1"/>
</dbReference>
<dbReference type="Gene3D" id="1.10.510.10">
    <property type="entry name" value="Transferase(Phosphotransferase) domain 1"/>
    <property type="match status" value="1"/>
</dbReference>
<dbReference type="HAMAP" id="MF_03181">
    <property type="entry name" value="PAN3"/>
    <property type="match status" value="1"/>
</dbReference>
<dbReference type="InterPro" id="IPR011009">
    <property type="entry name" value="Kinase-like_dom_sf"/>
</dbReference>
<dbReference type="InterPro" id="IPR030844">
    <property type="entry name" value="PAN3"/>
</dbReference>
<dbReference type="InterPro" id="IPR041332">
    <property type="entry name" value="Pan3_PK"/>
</dbReference>
<dbReference type="InterPro" id="IPR000719">
    <property type="entry name" value="Prot_kinase_dom"/>
</dbReference>
<dbReference type="InterPro" id="IPR000571">
    <property type="entry name" value="Znf_CCCH"/>
</dbReference>
<dbReference type="PANTHER" id="PTHR12272">
    <property type="entry name" value="DEADENYLATION COMPLEX SUBUNIT PAN3"/>
    <property type="match status" value="1"/>
</dbReference>
<dbReference type="PANTHER" id="PTHR12272:SF11">
    <property type="entry name" value="PAN2-PAN3 DEADENYLATION COMPLEX SUBUNIT PAN3"/>
    <property type="match status" value="1"/>
</dbReference>
<dbReference type="Pfam" id="PF18101">
    <property type="entry name" value="Pan3_PK"/>
    <property type="match status" value="1"/>
</dbReference>
<dbReference type="SUPFAM" id="SSF56112">
    <property type="entry name" value="Protein kinase-like (PK-like)"/>
    <property type="match status" value="1"/>
</dbReference>
<dbReference type="PROSITE" id="PS50011">
    <property type="entry name" value="PROTEIN_KINASE_DOM"/>
    <property type="match status" value="1"/>
</dbReference>
<dbReference type="PROSITE" id="PS50103">
    <property type="entry name" value="ZF_C3H1"/>
    <property type="match status" value="1"/>
</dbReference>
<gene>
    <name evidence="1" type="primary">pan3</name>
    <name type="ORF">AN0769</name>
    <name type="ORF">AN10121/AN10119</name>
</gene>
<sequence length="661" mass="73162">MASVGKPSLEDARRGTGSPKMKARENAKDTLCRNVTIYGRCRYEDKGCAFNHDPHKNSNQSDNASKKRFNVDSPSFTPSLLPSNGSSPTSSSSSLKKSSTISPKAANAAPFQPRTAASRSNTSTPGVRQDAVAPDWSVAEAQEFIPQGFDPTHMSPLHGNGNPGVASANAFDPFVSTPNPLAAPGAVGPVQANPFSHDAAAATLGGAYYANQAGFQQPVQYHLYAPIGPHNQNALAYQRNVHDLFLPNDFREELQKKAAATLQTLPNTQLPAQVDYFHSLVPLDLNHQKNAAIFGYPSWVYKAQSTKDGSYYALRRLEGFRLTNEKAIRSVQAWKRIASGSMVTIHDAFTSRSFQDSSLIFVTDYHPLSKTLAEQHLSAGGPRFQARHNAHVPEQILWGYITQIANALKCIHSAGLAARIIDPSKILLTGRNRIRLNACAIMDVVQYDAQRSVADLQRQDLVNFGQLILTLGANQPNVIHNPSKAMEHFTRAYSPQLKNTVMWLLGGMQKDQERNIDILINGISSQLMSTFDSALHLDDQLTSDLGRELENGRLVRLLTKLNFINERPEHEHDRQWSENGERFYLKIFRDYVFHQVDASGDPVVDLGHVLTCLNKLDAGTDERITLVSRDEQTCFVVSYKELKKGLESSFQALLRPSRRPH</sequence>
<organism>
    <name type="scientific">Emericella nidulans (strain FGSC A4 / ATCC 38163 / CBS 112.46 / NRRL 194 / M139)</name>
    <name type="common">Aspergillus nidulans</name>
    <dbReference type="NCBI Taxonomy" id="227321"/>
    <lineage>
        <taxon>Eukaryota</taxon>
        <taxon>Fungi</taxon>
        <taxon>Dikarya</taxon>
        <taxon>Ascomycota</taxon>
        <taxon>Pezizomycotina</taxon>
        <taxon>Eurotiomycetes</taxon>
        <taxon>Eurotiomycetidae</taxon>
        <taxon>Eurotiales</taxon>
        <taxon>Aspergillaceae</taxon>
        <taxon>Aspergillus</taxon>
        <taxon>Aspergillus subgen. Nidulantes</taxon>
    </lineage>
</organism>
<proteinExistence type="inferred from homology"/>
<accession>Q5BFB1</accession>
<accession>C8VQW3</accession>
<accession>C8VQW4</accession>
<feature type="chain" id="PRO_0000295368" description="PAN2-PAN3 deadenylation complex subunit pan3">
    <location>
        <begin position="1"/>
        <end position="661"/>
    </location>
</feature>
<feature type="zinc finger region" description="C3H1-type" evidence="1">
    <location>
        <begin position="26"/>
        <end position="55"/>
    </location>
</feature>
<feature type="region of interest" description="Disordered" evidence="2">
    <location>
        <begin position="1"/>
        <end position="29"/>
    </location>
</feature>
<feature type="region of interest" description="Disordered" evidence="2">
    <location>
        <begin position="53"/>
        <end position="131"/>
    </location>
</feature>
<feature type="region of interest" description="Pseudokinase domain" evidence="1">
    <location>
        <begin position="263"/>
        <end position="524"/>
    </location>
</feature>
<feature type="region of interest" description="Knob domain" evidence="1">
    <location>
        <begin position="564"/>
        <end position="661"/>
    </location>
</feature>
<feature type="coiled-coil region" evidence="1">
    <location>
        <begin position="525"/>
        <end position="563"/>
    </location>
</feature>
<feature type="short sequence motif" description="PABPC-interacting motif-2 (PAM-2)" evidence="3">
    <location>
        <begin position="63"/>
        <end position="83"/>
    </location>
</feature>
<feature type="compositionally biased region" description="Low complexity" evidence="2">
    <location>
        <begin position="77"/>
        <end position="104"/>
    </location>
</feature>
<feature type="compositionally biased region" description="Polar residues" evidence="2">
    <location>
        <begin position="115"/>
        <end position="126"/>
    </location>
</feature>
<feature type="binding site" evidence="1">
    <location>
        <position position="315"/>
    </location>
    <ligand>
        <name>ATP</name>
        <dbReference type="ChEBI" id="CHEBI:30616"/>
    </ligand>
</feature>
<feature type="binding site" evidence="1">
    <location>
        <begin position="364"/>
        <end position="371"/>
    </location>
    <ligand>
        <name>ATP</name>
        <dbReference type="ChEBI" id="CHEBI:30616"/>
    </ligand>
</feature>
<feature type="binding site" evidence="1">
    <location>
        <begin position="424"/>
        <end position="425"/>
    </location>
    <ligand>
        <name>ATP</name>
        <dbReference type="ChEBI" id="CHEBI:30616"/>
    </ligand>
</feature>
<name>PAN3_EMENI</name>
<comment type="function">
    <text evidence="1">Regulatory subunit of the poly(A)-nuclease (PAN) deadenylation complex, one of two cytoplasmic mRNA deadenylases involved in mRNA turnover. PAN specifically shortens poly(A) tails of RNA and the activity is stimulated by poly(A)-binding protein pab1. PAN deadenylation is followed by rapid degradation of the shortened mRNA tails by the CCR4-NOT complex. Deadenylated mRNAs are then degraded by two alternative mechanisms, namely exosome-mediated 3'-5' exonucleolytic degradation, or deadenylation-dependent mRNA decaping and subsequent 5'-3' exonucleolytic degradation by XRN1. May also be involved in post-transcriptional maturation of mRNA poly(A) tails. pan3 acts as a positive regulator for PAN activity, recruiting the catalytic subunit pan2 to mRNA via its interaction with RNA and with pab1.</text>
</comment>
<comment type="subunit">
    <text evidence="1">Homodimer. Forms a heterotrimer with a catalytic subunit pan2 to form the poly(a)-nuclease (PAN) deadenylation complex. Interacts (via PAM-2 motif) with poly(A)-binding protein pab1 (via PABC domain), conferring substrate specificity of the enzyme complex.</text>
</comment>
<comment type="subcellular location">
    <subcellularLocation>
        <location evidence="1">Cytoplasm</location>
    </subcellularLocation>
</comment>
<comment type="domain">
    <text evidence="1">The N-terminal zinc finger binds to poly(A) RNA.</text>
</comment>
<comment type="domain">
    <text evidence="1">Contains a pseudokinase domain. The protein kinase domain is predicted to be catalytically inactive because some of the residues important for catalytic activity are substituted and it lacks the equivalent of the binding site for a peptide substrate. However, it has retained an ATP-binding site and ATP-binding is required for mRNA degradation, stimulating the activity of the pan2 nuclease in vitro. The nucleotide-binding site is juxtaposed to the RNase active site of pan2 in the complex and may actually bind nucleosides of a poly(A) RNA rather than ATP, feeding the poly(A)-tail to the active site of the deadenylase and thus increasing the efficiency with which this distributive enzyme degrades oligo(A) RNAs.</text>
</comment>
<comment type="domain">
    <text evidence="1">The pseudokinase domain, the coiled-coil (CC), and C-terminal knob domain (CK) form a structural unit (PKC) that forms an extensive high-affinity interaction surface for pan2.</text>
</comment>
<comment type="similarity">
    <text evidence="1">Belongs to the protein kinase superfamily. PAN3 family.</text>
</comment>
<comment type="sequence caution" evidence="3">
    <conflict type="erroneous gene model prediction">
        <sequence resource="EMBL-CDS" id="CBF88820"/>
    </conflict>
</comment>
<comment type="sequence caution" evidence="3">
    <conflict type="erroneous gene model prediction">
        <sequence resource="EMBL-CDS" id="CBF88822"/>
    </conflict>
</comment>
<comment type="sequence caution" evidence="3">
    <conflict type="erroneous gene model prediction">
        <sequence resource="EMBL-CDS" id="EAA65411"/>
    </conflict>
</comment>
<reference key="1">
    <citation type="journal article" date="2005" name="Nature">
        <title>Sequencing of Aspergillus nidulans and comparative analysis with A. fumigatus and A. oryzae.</title>
        <authorList>
            <person name="Galagan J.E."/>
            <person name="Calvo S.E."/>
            <person name="Cuomo C."/>
            <person name="Ma L.-J."/>
            <person name="Wortman J.R."/>
            <person name="Batzoglou S."/>
            <person name="Lee S.-I."/>
            <person name="Bastuerkmen M."/>
            <person name="Spevak C.C."/>
            <person name="Clutterbuck J."/>
            <person name="Kapitonov V."/>
            <person name="Jurka J."/>
            <person name="Scazzocchio C."/>
            <person name="Farman M.L."/>
            <person name="Butler J."/>
            <person name="Purcell S."/>
            <person name="Harris S."/>
            <person name="Braus G.H."/>
            <person name="Draht O."/>
            <person name="Busch S."/>
            <person name="D'Enfert C."/>
            <person name="Bouchier C."/>
            <person name="Goldman G.H."/>
            <person name="Bell-Pedersen D."/>
            <person name="Griffiths-Jones S."/>
            <person name="Doonan J.H."/>
            <person name="Yu J."/>
            <person name="Vienken K."/>
            <person name="Pain A."/>
            <person name="Freitag M."/>
            <person name="Selker E.U."/>
            <person name="Archer D.B."/>
            <person name="Penalva M.A."/>
            <person name="Oakley B.R."/>
            <person name="Momany M."/>
            <person name="Tanaka T."/>
            <person name="Kumagai T."/>
            <person name="Asai K."/>
            <person name="Machida M."/>
            <person name="Nierman W.C."/>
            <person name="Denning D.W."/>
            <person name="Caddick M.X."/>
            <person name="Hynes M."/>
            <person name="Paoletti M."/>
            <person name="Fischer R."/>
            <person name="Miller B.L."/>
            <person name="Dyer P.S."/>
            <person name="Sachs M.S."/>
            <person name="Osmani S.A."/>
            <person name="Birren B.W."/>
        </authorList>
    </citation>
    <scope>NUCLEOTIDE SEQUENCE [LARGE SCALE GENOMIC DNA]</scope>
    <source>
        <strain>FGSC A4 / ATCC 38163 / CBS 112.46 / NRRL 194 / M139</strain>
    </source>
</reference>
<reference key="2">
    <citation type="journal article" date="2009" name="Fungal Genet. Biol.">
        <title>The 2008 update of the Aspergillus nidulans genome annotation: a community effort.</title>
        <authorList>
            <person name="Wortman J.R."/>
            <person name="Gilsenan J.M."/>
            <person name="Joardar V."/>
            <person name="Deegan J."/>
            <person name="Clutterbuck J."/>
            <person name="Andersen M.R."/>
            <person name="Archer D."/>
            <person name="Bencina M."/>
            <person name="Braus G."/>
            <person name="Coutinho P."/>
            <person name="von Dohren H."/>
            <person name="Doonan J."/>
            <person name="Driessen A.J."/>
            <person name="Durek P."/>
            <person name="Espeso E."/>
            <person name="Fekete E."/>
            <person name="Flipphi M."/>
            <person name="Estrada C.G."/>
            <person name="Geysens S."/>
            <person name="Goldman G."/>
            <person name="de Groot P.W."/>
            <person name="Hansen K."/>
            <person name="Harris S.D."/>
            <person name="Heinekamp T."/>
            <person name="Helmstaedt K."/>
            <person name="Henrissat B."/>
            <person name="Hofmann G."/>
            <person name="Homan T."/>
            <person name="Horio T."/>
            <person name="Horiuchi H."/>
            <person name="James S."/>
            <person name="Jones M."/>
            <person name="Karaffa L."/>
            <person name="Karanyi Z."/>
            <person name="Kato M."/>
            <person name="Keller N."/>
            <person name="Kelly D.E."/>
            <person name="Kiel J.A."/>
            <person name="Kim J.M."/>
            <person name="van der Klei I.J."/>
            <person name="Klis F.M."/>
            <person name="Kovalchuk A."/>
            <person name="Krasevec N."/>
            <person name="Kubicek C.P."/>
            <person name="Liu B."/>
            <person name="Maccabe A."/>
            <person name="Meyer V."/>
            <person name="Mirabito P."/>
            <person name="Miskei M."/>
            <person name="Mos M."/>
            <person name="Mullins J."/>
            <person name="Nelson D.R."/>
            <person name="Nielsen J."/>
            <person name="Oakley B.R."/>
            <person name="Osmani S.A."/>
            <person name="Pakula T."/>
            <person name="Paszewski A."/>
            <person name="Paulsen I."/>
            <person name="Pilsyk S."/>
            <person name="Pocsi I."/>
            <person name="Punt P.J."/>
            <person name="Ram A.F."/>
            <person name="Ren Q."/>
            <person name="Robellet X."/>
            <person name="Robson G."/>
            <person name="Seiboth B."/>
            <person name="van Solingen P."/>
            <person name="Specht T."/>
            <person name="Sun J."/>
            <person name="Taheri-Talesh N."/>
            <person name="Takeshita N."/>
            <person name="Ussery D."/>
            <person name="vanKuyk P.A."/>
            <person name="Visser H."/>
            <person name="van de Vondervoort P.J."/>
            <person name="de Vries R.P."/>
            <person name="Walton J."/>
            <person name="Xiang X."/>
            <person name="Xiong Y."/>
            <person name="Zeng A.P."/>
            <person name="Brandt B.W."/>
            <person name="Cornell M.J."/>
            <person name="van den Hondel C.A."/>
            <person name="Visser J."/>
            <person name="Oliver S.G."/>
            <person name="Turner G."/>
        </authorList>
    </citation>
    <scope>GENOME REANNOTATION</scope>
    <source>
        <strain>FGSC A4 / ATCC 38163 / CBS 112.46 / NRRL 194 / M139</strain>
    </source>
</reference>